<dbReference type="EMBL" id="CP000828">
    <property type="protein sequence ID" value="ABW29677.1"/>
    <property type="molecule type" value="Genomic_DNA"/>
</dbReference>
<dbReference type="RefSeq" id="WP_010469309.1">
    <property type="nucleotide sequence ID" value="NC_009925.1"/>
</dbReference>
<dbReference type="SMR" id="B0C1E2"/>
<dbReference type="STRING" id="329726.AM1_4705"/>
<dbReference type="KEGG" id="amr:AM1_4705"/>
<dbReference type="eggNOG" id="COG0186">
    <property type="taxonomic scope" value="Bacteria"/>
</dbReference>
<dbReference type="HOGENOM" id="CLU_073626_1_2_3"/>
<dbReference type="OrthoDB" id="9811714at2"/>
<dbReference type="Proteomes" id="UP000000268">
    <property type="component" value="Chromosome"/>
</dbReference>
<dbReference type="GO" id="GO:0022627">
    <property type="term" value="C:cytosolic small ribosomal subunit"/>
    <property type="evidence" value="ECO:0007669"/>
    <property type="project" value="TreeGrafter"/>
</dbReference>
<dbReference type="GO" id="GO:0019843">
    <property type="term" value="F:rRNA binding"/>
    <property type="evidence" value="ECO:0007669"/>
    <property type="project" value="UniProtKB-UniRule"/>
</dbReference>
<dbReference type="GO" id="GO:0003735">
    <property type="term" value="F:structural constituent of ribosome"/>
    <property type="evidence" value="ECO:0007669"/>
    <property type="project" value="InterPro"/>
</dbReference>
<dbReference type="GO" id="GO:0006412">
    <property type="term" value="P:translation"/>
    <property type="evidence" value="ECO:0007669"/>
    <property type="project" value="UniProtKB-UniRule"/>
</dbReference>
<dbReference type="CDD" id="cd00364">
    <property type="entry name" value="Ribosomal_uS17"/>
    <property type="match status" value="1"/>
</dbReference>
<dbReference type="Gene3D" id="2.40.50.140">
    <property type="entry name" value="Nucleic acid-binding proteins"/>
    <property type="match status" value="1"/>
</dbReference>
<dbReference type="HAMAP" id="MF_01345_B">
    <property type="entry name" value="Ribosomal_uS17_B"/>
    <property type="match status" value="1"/>
</dbReference>
<dbReference type="InterPro" id="IPR012340">
    <property type="entry name" value="NA-bd_OB-fold"/>
</dbReference>
<dbReference type="InterPro" id="IPR000266">
    <property type="entry name" value="Ribosomal_uS17"/>
</dbReference>
<dbReference type="InterPro" id="IPR019984">
    <property type="entry name" value="Ribosomal_uS17_bact/chlr"/>
</dbReference>
<dbReference type="InterPro" id="IPR019979">
    <property type="entry name" value="Ribosomal_uS17_CS"/>
</dbReference>
<dbReference type="NCBIfam" id="NF004123">
    <property type="entry name" value="PRK05610.1"/>
    <property type="match status" value="1"/>
</dbReference>
<dbReference type="NCBIfam" id="TIGR03635">
    <property type="entry name" value="uS17_bact"/>
    <property type="match status" value="1"/>
</dbReference>
<dbReference type="PANTHER" id="PTHR10744">
    <property type="entry name" value="40S RIBOSOMAL PROTEIN S11 FAMILY MEMBER"/>
    <property type="match status" value="1"/>
</dbReference>
<dbReference type="PANTHER" id="PTHR10744:SF1">
    <property type="entry name" value="SMALL RIBOSOMAL SUBUNIT PROTEIN US17M"/>
    <property type="match status" value="1"/>
</dbReference>
<dbReference type="Pfam" id="PF00366">
    <property type="entry name" value="Ribosomal_S17"/>
    <property type="match status" value="1"/>
</dbReference>
<dbReference type="PRINTS" id="PR00973">
    <property type="entry name" value="RIBOSOMALS17"/>
</dbReference>
<dbReference type="SUPFAM" id="SSF50249">
    <property type="entry name" value="Nucleic acid-binding proteins"/>
    <property type="match status" value="1"/>
</dbReference>
<dbReference type="PROSITE" id="PS00056">
    <property type="entry name" value="RIBOSOMAL_S17"/>
    <property type="match status" value="1"/>
</dbReference>
<name>RS17_ACAM1</name>
<sequence length="83" mass="9450">MAIKERIGVVVSDKMDKTVVVAVSNRVPHKKYGKIVGQTRRYKAHDEENACHVGDRVRIRESRPLSRTKRWAVTDVLVAANRP</sequence>
<feature type="chain" id="PRO_1000086828" description="Small ribosomal subunit protein uS17">
    <location>
        <begin position="1"/>
        <end position="83"/>
    </location>
</feature>
<keyword id="KW-1185">Reference proteome</keyword>
<keyword id="KW-0687">Ribonucleoprotein</keyword>
<keyword id="KW-0689">Ribosomal protein</keyword>
<keyword id="KW-0694">RNA-binding</keyword>
<keyword id="KW-0699">rRNA-binding</keyword>
<organism>
    <name type="scientific">Acaryochloris marina (strain MBIC 11017)</name>
    <dbReference type="NCBI Taxonomy" id="329726"/>
    <lineage>
        <taxon>Bacteria</taxon>
        <taxon>Bacillati</taxon>
        <taxon>Cyanobacteriota</taxon>
        <taxon>Cyanophyceae</taxon>
        <taxon>Acaryochloridales</taxon>
        <taxon>Acaryochloridaceae</taxon>
        <taxon>Acaryochloris</taxon>
    </lineage>
</organism>
<proteinExistence type="inferred from homology"/>
<gene>
    <name evidence="1" type="primary">rpsQ</name>
    <name evidence="1" type="synonym">rps17</name>
    <name type="ordered locus">AM1_4705</name>
</gene>
<evidence type="ECO:0000255" key="1">
    <source>
        <dbReference type="HAMAP-Rule" id="MF_01345"/>
    </source>
</evidence>
<evidence type="ECO:0000305" key="2"/>
<protein>
    <recommendedName>
        <fullName evidence="1">Small ribosomal subunit protein uS17</fullName>
    </recommendedName>
    <alternativeName>
        <fullName evidence="2">30S ribosomal protein S17</fullName>
    </alternativeName>
</protein>
<comment type="function">
    <text evidence="1">One of the primary rRNA binding proteins, it binds specifically to the 5'-end of 16S ribosomal RNA.</text>
</comment>
<comment type="subunit">
    <text evidence="1">Part of the 30S ribosomal subunit.</text>
</comment>
<comment type="similarity">
    <text evidence="1">Belongs to the universal ribosomal protein uS17 family.</text>
</comment>
<reference key="1">
    <citation type="journal article" date="2008" name="Proc. Natl. Acad. Sci. U.S.A.">
        <title>Niche adaptation and genome expansion in the chlorophyll d-producing cyanobacterium Acaryochloris marina.</title>
        <authorList>
            <person name="Swingley W.D."/>
            <person name="Chen M."/>
            <person name="Cheung P.C."/>
            <person name="Conrad A.L."/>
            <person name="Dejesa L.C."/>
            <person name="Hao J."/>
            <person name="Honchak B.M."/>
            <person name="Karbach L.E."/>
            <person name="Kurdoglu A."/>
            <person name="Lahiri S."/>
            <person name="Mastrian S.D."/>
            <person name="Miyashita H."/>
            <person name="Page L."/>
            <person name="Ramakrishna P."/>
            <person name="Satoh S."/>
            <person name="Sattley W.M."/>
            <person name="Shimada Y."/>
            <person name="Taylor H.L."/>
            <person name="Tomo T."/>
            <person name="Tsuchiya T."/>
            <person name="Wang Z.T."/>
            <person name="Raymond J."/>
            <person name="Mimuro M."/>
            <person name="Blankenship R.E."/>
            <person name="Touchman J.W."/>
        </authorList>
    </citation>
    <scope>NUCLEOTIDE SEQUENCE [LARGE SCALE GENOMIC DNA]</scope>
    <source>
        <strain>MBIC 11017</strain>
    </source>
</reference>
<accession>B0C1E2</accession>